<proteinExistence type="inferred from homology"/>
<organism>
    <name type="scientific">Onion yellows phytoplasma (strain OY-M)</name>
    <dbReference type="NCBI Taxonomy" id="262768"/>
    <lineage>
        <taxon>Bacteria</taxon>
        <taxon>Bacillati</taxon>
        <taxon>Mycoplasmatota</taxon>
        <taxon>Mollicutes</taxon>
        <taxon>Acholeplasmatales</taxon>
        <taxon>Acholeplasmataceae</taxon>
        <taxon>Candidatus Phytoplasma</taxon>
        <taxon>16SrI (Aster yellows group)</taxon>
    </lineage>
</organism>
<accession>P61745</accession>
<reference key="1">
    <citation type="journal article" date="2004" name="Nat. Genet.">
        <title>Reductive evolution suggested from the complete genome sequence of a plant-pathogenic phytoplasma.</title>
        <authorList>
            <person name="Oshima K."/>
            <person name="Kakizawa S."/>
            <person name="Nishigawa H."/>
            <person name="Jung H.-Y."/>
            <person name="Wei W."/>
            <person name="Suzuki S."/>
            <person name="Arashida R."/>
            <person name="Nakata D."/>
            <person name="Miyata S."/>
            <person name="Ugaki M."/>
            <person name="Namba S."/>
        </authorList>
    </citation>
    <scope>NUCLEOTIDE SEQUENCE [LARGE SCALE GENOMIC DNA]</scope>
    <source>
        <strain>OY-M</strain>
    </source>
</reference>
<feature type="chain" id="PRO_0000138003" description="Glycerol-3-phosphate dehydrogenase [NAD(P)+]">
    <location>
        <begin position="1"/>
        <end position="329"/>
    </location>
</feature>
<feature type="active site" description="Proton acceptor" evidence="1">
    <location>
        <position position="188"/>
    </location>
</feature>
<feature type="binding site" evidence="1">
    <location>
        <position position="11"/>
    </location>
    <ligand>
        <name>NADPH</name>
        <dbReference type="ChEBI" id="CHEBI:57783"/>
    </ligand>
</feature>
<feature type="binding site" evidence="1">
    <location>
        <position position="101"/>
    </location>
    <ligand>
        <name>NADPH</name>
        <dbReference type="ChEBI" id="CHEBI:57783"/>
    </ligand>
</feature>
<feature type="binding site" evidence="1">
    <location>
        <position position="101"/>
    </location>
    <ligand>
        <name>sn-glycerol 3-phosphate</name>
        <dbReference type="ChEBI" id="CHEBI:57597"/>
    </ligand>
</feature>
<feature type="binding site" evidence="1">
    <location>
        <position position="132"/>
    </location>
    <ligand>
        <name>sn-glycerol 3-phosphate</name>
        <dbReference type="ChEBI" id="CHEBI:57597"/>
    </ligand>
</feature>
<feature type="binding site" evidence="1">
    <location>
        <position position="134"/>
    </location>
    <ligand>
        <name>sn-glycerol 3-phosphate</name>
        <dbReference type="ChEBI" id="CHEBI:57597"/>
    </ligand>
</feature>
<feature type="binding site" evidence="1">
    <location>
        <position position="136"/>
    </location>
    <ligand>
        <name>NADPH</name>
        <dbReference type="ChEBI" id="CHEBI:57783"/>
    </ligand>
</feature>
<feature type="binding site" evidence="1">
    <location>
        <position position="188"/>
    </location>
    <ligand>
        <name>sn-glycerol 3-phosphate</name>
        <dbReference type="ChEBI" id="CHEBI:57597"/>
    </ligand>
</feature>
<feature type="binding site" evidence="1">
    <location>
        <position position="241"/>
    </location>
    <ligand>
        <name>sn-glycerol 3-phosphate</name>
        <dbReference type="ChEBI" id="CHEBI:57597"/>
    </ligand>
</feature>
<feature type="binding site" evidence="1">
    <location>
        <position position="251"/>
    </location>
    <ligand>
        <name>sn-glycerol 3-phosphate</name>
        <dbReference type="ChEBI" id="CHEBI:57597"/>
    </ligand>
</feature>
<feature type="binding site" evidence="1">
    <location>
        <position position="252"/>
    </location>
    <ligand>
        <name>NADPH</name>
        <dbReference type="ChEBI" id="CHEBI:57783"/>
    </ligand>
</feature>
<feature type="binding site" evidence="1">
    <location>
        <position position="252"/>
    </location>
    <ligand>
        <name>sn-glycerol 3-phosphate</name>
        <dbReference type="ChEBI" id="CHEBI:57597"/>
    </ligand>
</feature>
<feature type="binding site" evidence="1">
    <location>
        <position position="253"/>
    </location>
    <ligand>
        <name>sn-glycerol 3-phosphate</name>
        <dbReference type="ChEBI" id="CHEBI:57597"/>
    </ligand>
</feature>
<feature type="binding site" evidence="1">
    <location>
        <position position="278"/>
    </location>
    <ligand>
        <name>NADPH</name>
        <dbReference type="ChEBI" id="CHEBI:57783"/>
    </ligand>
</feature>
<evidence type="ECO:0000255" key="1">
    <source>
        <dbReference type="HAMAP-Rule" id="MF_00394"/>
    </source>
</evidence>
<evidence type="ECO:0000305" key="2"/>
<keyword id="KW-0963">Cytoplasm</keyword>
<keyword id="KW-0444">Lipid biosynthesis</keyword>
<keyword id="KW-0443">Lipid metabolism</keyword>
<keyword id="KW-0520">NAD</keyword>
<keyword id="KW-0521">NADP</keyword>
<keyword id="KW-0547">Nucleotide-binding</keyword>
<keyword id="KW-0560">Oxidoreductase</keyword>
<keyword id="KW-0594">Phospholipid biosynthesis</keyword>
<keyword id="KW-1208">Phospholipid metabolism</keyword>
<comment type="function">
    <text evidence="1">Catalyzes the reduction of the glycolytic intermediate dihydroxyacetone phosphate (DHAP) to sn-glycerol 3-phosphate (G3P), the key precursor for phospholipid synthesis.</text>
</comment>
<comment type="catalytic activity">
    <reaction evidence="1">
        <text>sn-glycerol 3-phosphate + NAD(+) = dihydroxyacetone phosphate + NADH + H(+)</text>
        <dbReference type="Rhea" id="RHEA:11092"/>
        <dbReference type="ChEBI" id="CHEBI:15378"/>
        <dbReference type="ChEBI" id="CHEBI:57540"/>
        <dbReference type="ChEBI" id="CHEBI:57597"/>
        <dbReference type="ChEBI" id="CHEBI:57642"/>
        <dbReference type="ChEBI" id="CHEBI:57945"/>
        <dbReference type="EC" id="1.1.1.94"/>
    </reaction>
    <physiologicalReaction direction="right-to-left" evidence="1">
        <dbReference type="Rhea" id="RHEA:11094"/>
    </physiologicalReaction>
</comment>
<comment type="catalytic activity">
    <reaction evidence="1">
        <text>sn-glycerol 3-phosphate + NADP(+) = dihydroxyacetone phosphate + NADPH + H(+)</text>
        <dbReference type="Rhea" id="RHEA:11096"/>
        <dbReference type="ChEBI" id="CHEBI:15378"/>
        <dbReference type="ChEBI" id="CHEBI:57597"/>
        <dbReference type="ChEBI" id="CHEBI:57642"/>
        <dbReference type="ChEBI" id="CHEBI:57783"/>
        <dbReference type="ChEBI" id="CHEBI:58349"/>
        <dbReference type="EC" id="1.1.1.94"/>
    </reaction>
    <physiologicalReaction direction="right-to-left" evidence="1">
        <dbReference type="Rhea" id="RHEA:11098"/>
    </physiologicalReaction>
</comment>
<comment type="pathway">
    <text evidence="1">Membrane lipid metabolism; glycerophospholipid metabolism.</text>
</comment>
<comment type="subcellular location">
    <subcellularLocation>
        <location evidence="1">Cytoplasm</location>
    </subcellularLocation>
</comment>
<comment type="similarity">
    <text evidence="1">Belongs to the NAD-dependent glycerol-3-phosphate dehydrogenase family.</text>
</comment>
<comment type="sequence caution" evidence="2">
    <conflict type="erroneous initiation">
        <sequence resource="EMBL-CDS" id="BAD04326"/>
    </conflict>
</comment>
<name>GPDA_ONYPE</name>
<dbReference type="EC" id="1.1.1.94" evidence="1"/>
<dbReference type="EMBL" id="AP006628">
    <property type="protein sequence ID" value="BAD04326.1"/>
    <property type="status" value="ALT_INIT"/>
    <property type="molecule type" value="Genomic_DNA"/>
</dbReference>
<dbReference type="SMR" id="P61745"/>
<dbReference type="STRING" id="262768.PAM_241"/>
<dbReference type="KEGG" id="poy:PAM_241"/>
<dbReference type="eggNOG" id="COG0240">
    <property type="taxonomic scope" value="Bacteria"/>
</dbReference>
<dbReference type="HOGENOM" id="CLU_033449_0_2_14"/>
<dbReference type="BioCyc" id="OYEL262768:G1G26-289-MONOMER"/>
<dbReference type="UniPathway" id="UPA00940"/>
<dbReference type="Proteomes" id="UP000002523">
    <property type="component" value="Chromosome"/>
</dbReference>
<dbReference type="GO" id="GO:0005829">
    <property type="term" value="C:cytosol"/>
    <property type="evidence" value="ECO:0007669"/>
    <property type="project" value="TreeGrafter"/>
</dbReference>
<dbReference type="GO" id="GO:0047952">
    <property type="term" value="F:glycerol-3-phosphate dehydrogenase [NAD(P)+] activity"/>
    <property type="evidence" value="ECO:0007669"/>
    <property type="project" value="UniProtKB-UniRule"/>
</dbReference>
<dbReference type="GO" id="GO:0051287">
    <property type="term" value="F:NAD binding"/>
    <property type="evidence" value="ECO:0007669"/>
    <property type="project" value="InterPro"/>
</dbReference>
<dbReference type="GO" id="GO:0005975">
    <property type="term" value="P:carbohydrate metabolic process"/>
    <property type="evidence" value="ECO:0007669"/>
    <property type="project" value="InterPro"/>
</dbReference>
<dbReference type="GO" id="GO:0046167">
    <property type="term" value="P:glycerol-3-phosphate biosynthetic process"/>
    <property type="evidence" value="ECO:0007669"/>
    <property type="project" value="UniProtKB-UniRule"/>
</dbReference>
<dbReference type="GO" id="GO:0046168">
    <property type="term" value="P:glycerol-3-phosphate catabolic process"/>
    <property type="evidence" value="ECO:0007669"/>
    <property type="project" value="InterPro"/>
</dbReference>
<dbReference type="GO" id="GO:0006650">
    <property type="term" value="P:glycerophospholipid metabolic process"/>
    <property type="evidence" value="ECO:0007669"/>
    <property type="project" value="UniProtKB-UniRule"/>
</dbReference>
<dbReference type="GO" id="GO:0008654">
    <property type="term" value="P:phospholipid biosynthetic process"/>
    <property type="evidence" value="ECO:0007669"/>
    <property type="project" value="UniProtKB-KW"/>
</dbReference>
<dbReference type="Gene3D" id="1.10.1040.10">
    <property type="entry name" value="N-(1-d-carboxylethyl)-l-norvaline Dehydrogenase, domain 2"/>
    <property type="match status" value="1"/>
</dbReference>
<dbReference type="Gene3D" id="3.40.50.720">
    <property type="entry name" value="NAD(P)-binding Rossmann-like Domain"/>
    <property type="match status" value="1"/>
</dbReference>
<dbReference type="HAMAP" id="MF_00394">
    <property type="entry name" value="NAD_Glyc3P_dehydrog"/>
    <property type="match status" value="1"/>
</dbReference>
<dbReference type="InterPro" id="IPR008927">
    <property type="entry name" value="6-PGluconate_DH-like_C_sf"/>
</dbReference>
<dbReference type="InterPro" id="IPR013328">
    <property type="entry name" value="6PGD_dom2"/>
</dbReference>
<dbReference type="InterPro" id="IPR006168">
    <property type="entry name" value="G3P_DH_NAD-dep"/>
</dbReference>
<dbReference type="InterPro" id="IPR006109">
    <property type="entry name" value="G3P_DH_NAD-dep_C"/>
</dbReference>
<dbReference type="InterPro" id="IPR011128">
    <property type="entry name" value="G3P_DH_NAD-dep_N"/>
</dbReference>
<dbReference type="InterPro" id="IPR036291">
    <property type="entry name" value="NAD(P)-bd_dom_sf"/>
</dbReference>
<dbReference type="NCBIfam" id="NF000940">
    <property type="entry name" value="PRK00094.1-2"/>
    <property type="match status" value="1"/>
</dbReference>
<dbReference type="NCBIfam" id="NF000942">
    <property type="entry name" value="PRK00094.1-4"/>
    <property type="match status" value="1"/>
</dbReference>
<dbReference type="PANTHER" id="PTHR11728">
    <property type="entry name" value="GLYCEROL-3-PHOSPHATE DEHYDROGENASE"/>
    <property type="match status" value="1"/>
</dbReference>
<dbReference type="PANTHER" id="PTHR11728:SF1">
    <property type="entry name" value="GLYCEROL-3-PHOSPHATE DEHYDROGENASE [NAD(+)] 2, CHLOROPLASTIC"/>
    <property type="match status" value="1"/>
</dbReference>
<dbReference type="Pfam" id="PF07479">
    <property type="entry name" value="NAD_Gly3P_dh_C"/>
    <property type="match status" value="1"/>
</dbReference>
<dbReference type="Pfam" id="PF01210">
    <property type="entry name" value="NAD_Gly3P_dh_N"/>
    <property type="match status" value="1"/>
</dbReference>
<dbReference type="PIRSF" id="PIRSF000114">
    <property type="entry name" value="Glycerol-3-P_dh"/>
    <property type="match status" value="1"/>
</dbReference>
<dbReference type="PRINTS" id="PR00077">
    <property type="entry name" value="GPDHDRGNASE"/>
</dbReference>
<dbReference type="SUPFAM" id="SSF48179">
    <property type="entry name" value="6-phosphogluconate dehydrogenase C-terminal domain-like"/>
    <property type="match status" value="1"/>
</dbReference>
<dbReference type="SUPFAM" id="SSF51735">
    <property type="entry name" value="NAD(P)-binding Rossmann-fold domains"/>
    <property type="match status" value="1"/>
</dbReference>
<dbReference type="PROSITE" id="PS00957">
    <property type="entry name" value="NAD_G3PDH"/>
    <property type="match status" value="1"/>
</dbReference>
<sequence length="329" mass="36218">MKITIIGSGAWGSTLAQVLTDNNNQVLLYDINLSYVEKINQGKHPIFNAPLVNVKAVSCLKQALDYSDLIVLSVPMKFMRHLLKQIALMLTTPKSFVNVSKGIEPLTFLRVSEIVKQVIPAPLLANFASLMGPSHAEEVILRKLTLLTAASSNPAFALEIQKLFSCPNYLKVYTSSDLVGNEICSAFKNVLAFINGILVAKNFGINSQAALMSRGILEMSVLVTFYQGNPQTVLGLPGLGDLIVTAFSKYSRNFNAGAKIAAGITYQQIIDSSLQTIEGFQTLNAFYQLQLKHNLDLPIIQASYQLIFESKPFETVFATLMQRPFKSEF</sequence>
<protein>
    <recommendedName>
        <fullName evidence="1">Glycerol-3-phosphate dehydrogenase [NAD(P)+]</fullName>
        <ecNumber evidence="1">1.1.1.94</ecNumber>
    </recommendedName>
    <alternativeName>
        <fullName evidence="1">NAD(P)(+)-dependent glycerol-3-phosphate dehydrogenase</fullName>
    </alternativeName>
    <alternativeName>
        <fullName evidence="1">NAD(P)H-dependent dihydroxyacetone-phosphate reductase</fullName>
    </alternativeName>
</protein>
<gene>
    <name evidence="1" type="primary">gpsA</name>
    <name type="ordered locus">PAM_241</name>
</gene>